<dbReference type="EC" id="1.16.3.1"/>
<dbReference type="EMBL" id="X56778">
    <property type="protein sequence ID" value="CAA40096.1"/>
    <property type="molecule type" value="mRNA"/>
</dbReference>
<dbReference type="PIR" id="S45603">
    <property type="entry name" value="S45603"/>
</dbReference>
<dbReference type="SMR" id="P42577"/>
<dbReference type="GO" id="GO:0005737">
    <property type="term" value="C:cytoplasm"/>
    <property type="evidence" value="ECO:0007669"/>
    <property type="project" value="UniProtKB-SubCell"/>
</dbReference>
<dbReference type="GO" id="GO:0008199">
    <property type="term" value="F:ferric iron binding"/>
    <property type="evidence" value="ECO:0007669"/>
    <property type="project" value="InterPro"/>
</dbReference>
<dbReference type="GO" id="GO:0008198">
    <property type="term" value="F:ferrous iron binding"/>
    <property type="evidence" value="ECO:0007669"/>
    <property type="project" value="TreeGrafter"/>
</dbReference>
<dbReference type="GO" id="GO:0004322">
    <property type="term" value="F:ferroxidase activity"/>
    <property type="evidence" value="ECO:0007669"/>
    <property type="project" value="UniProtKB-EC"/>
</dbReference>
<dbReference type="GO" id="GO:0006879">
    <property type="term" value="P:intracellular iron ion homeostasis"/>
    <property type="evidence" value="ECO:0007669"/>
    <property type="project" value="UniProtKB-KW"/>
</dbReference>
<dbReference type="GO" id="GO:0006826">
    <property type="term" value="P:iron ion transport"/>
    <property type="evidence" value="ECO:0007669"/>
    <property type="project" value="InterPro"/>
</dbReference>
<dbReference type="CDD" id="cd01056">
    <property type="entry name" value="Euk_Ferritin"/>
    <property type="match status" value="1"/>
</dbReference>
<dbReference type="FunFam" id="1.20.1260.10:FF:000002">
    <property type="entry name" value="Ferritin, mitochondrial"/>
    <property type="match status" value="1"/>
</dbReference>
<dbReference type="Gene3D" id="1.20.1260.10">
    <property type="match status" value="1"/>
</dbReference>
<dbReference type="InterPro" id="IPR001519">
    <property type="entry name" value="Ferritin"/>
</dbReference>
<dbReference type="InterPro" id="IPR012347">
    <property type="entry name" value="Ferritin-like"/>
</dbReference>
<dbReference type="InterPro" id="IPR009040">
    <property type="entry name" value="Ferritin-like_diiron"/>
</dbReference>
<dbReference type="InterPro" id="IPR009078">
    <property type="entry name" value="Ferritin-like_SF"/>
</dbReference>
<dbReference type="InterPro" id="IPR014034">
    <property type="entry name" value="Ferritin_CS"/>
</dbReference>
<dbReference type="InterPro" id="IPR008331">
    <property type="entry name" value="Ferritin_DPS_dom"/>
</dbReference>
<dbReference type="PANTHER" id="PTHR11431">
    <property type="entry name" value="FERRITIN"/>
    <property type="match status" value="1"/>
</dbReference>
<dbReference type="PANTHER" id="PTHR11431:SF75">
    <property type="entry name" value="FERRITIN"/>
    <property type="match status" value="1"/>
</dbReference>
<dbReference type="Pfam" id="PF00210">
    <property type="entry name" value="Ferritin"/>
    <property type="match status" value="1"/>
</dbReference>
<dbReference type="SUPFAM" id="SSF47240">
    <property type="entry name" value="Ferritin-like"/>
    <property type="match status" value="1"/>
</dbReference>
<dbReference type="PROSITE" id="PS00540">
    <property type="entry name" value="FERRITIN_1"/>
    <property type="match status" value="1"/>
</dbReference>
<dbReference type="PROSITE" id="PS00204">
    <property type="entry name" value="FERRITIN_2"/>
    <property type="match status" value="1"/>
</dbReference>
<dbReference type="PROSITE" id="PS50905">
    <property type="entry name" value="FERRITIN_LIKE"/>
    <property type="match status" value="1"/>
</dbReference>
<reference key="1">
    <citation type="journal article" date="1994" name="Eur. J. Biochem.">
        <title>cDNA cloning and deduced amino acid sequence of two ferritins: soma ferritin and yolk ferritin, from the snail Lymnaea stagnalis L.</title>
        <authorList>
            <person name="von Darl M."/>
            <person name="Harrison M."/>
            <person name="Bottke W."/>
        </authorList>
    </citation>
    <scope>NUCLEOTIDE SEQUENCE [MRNA]</scope>
    <source>
        <tissue>Visceral mass</tissue>
    </source>
</reference>
<sequence length="174" mass="20140">MSVSQARQNYHAESEAGINRQINMELYASYSYQSMAYYFDRDDVALPGFHKFFKHQSEEEREHAEKLMKYQNKRGGRIVLQDIKKPDRDEWGTGLEAMQVALQLEKSVNQSLLDLHKLCTSHDDAQMADFLESEFLEEQVKSIKELSDYITNLKRVGPGLGEYIFDKETLSSSS</sequence>
<protein>
    <recommendedName>
        <fullName>Soma ferritin</fullName>
        <ecNumber>1.16.3.1</ecNumber>
    </recommendedName>
</protein>
<feature type="initiator methionine" description="Removed" evidence="3">
    <location>
        <position position="1"/>
    </location>
</feature>
<feature type="chain" id="PRO_0000201070" description="Soma ferritin">
    <location>
        <begin position="2"/>
        <end position="174"/>
    </location>
</feature>
<feature type="domain" description="Ferritin-like diiron" evidence="2">
    <location>
        <begin position="8"/>
        <end position="157"/>
    </location>
</feature>
<feature type="binding site" evidence="2">
    <location>
        <position position="25"/>
    </location>
    <ligand>
        <name>Fe cation</name>
        <dbReference type="ChEBI" id="CHEBI:24875"/>
        <label>1</label>
    </ligand>
</feature>
<feature type="binding site" evidence="2">
    <location>
        <position position="60"/>
    </location>
    <ligand>
        <name>Fe cation</name>
        <dbReference type="ChEBI" id="CHEBI:24875"/>
        <label>1</label>
    </ligand>
</feature>
<feature type="binding site" evidence="2">
    <location>
        <position position="60"/>
    </location>
    <ligand>
        <name>Fe cation</name>
        <dbReference type="ChEBI" id="CHEBI:24875"/>
        <label>2</label>
    </ligand>
</feature>
<feature type="binding site" evidence="2">
    <location>
        <position position="63"/>
    </location>
    <ligand>
        <name>Fe cation</name>
        <dbReference type="ChEBI" id="CHEBI:24875"/>
        <label>1</label>
    </ligand>
</feature>
<feature type="binding site" evidence="2">
    <location>
        <position position="105"/>
    </location>
    <ligand>
        <name>Fe cation</name>
        <dbReference type="ChEBI" id="CHEBI:24875"/>
        <label>2</label>
    </ligand>
</feature>
<feature type="binding site" evidence="2">
    <location>
        <position position="139"/>
    </location>
    <ligand>
        <name>Fe cation</name>
        <dbReference type="ChEBI" id="CHEBI:24875"/>
        <label>2</label>
    </ligand>
</feature>
<name>FRIS_LYMST</name>
<keyword id="KW-0963">Cytoplasm</keyword>
<keyword id="KW-0408">Iron</keyword>
<keyword id="KW-0409">Iron storage</keyword>
<keyword id="KW-0479">Metal-binding</keyword>
<keyword id="KW-0560">Oxidoreductase</keyword>
<evidence type="ECO:0000250" key="1"/>
<evidence type="ECO:0000255" key="2">
    <source>
        <dbReference type="PROSITE-ProRule" id="PRU00085"/>
    </source>
</evidence>
<evidence type="ECO:0000305" key="3"/>
<comment type="function">
    <text evidence="1">Stores iron in a soluble, non-toxic, readily available form. Important for iron homeostasis. Has ferroxidase activity. Iron is taken up in the ferrous form and deposited as ferric hydroxides after oxidation (By similarity).</text>
</comment>
<comment type="catalytic activity">
    <reaction>
        <text>4 Fe(2+) + O2 + 4 H(+) = 4 Fe(3+) + 2 H2O</text>
        <dbReference type="Rhea" id="RHEA:11148"/>
        <dbReference type="ChEBI" id="CHEBI:15377"/>
        <dbReference type="ChEBI" id="CHEBI:15378"/>
        <dbReference type="ChEBI" id="CHEBI:15379"/>
        <dbReference type="ChEBI" id="CHEBI:29033"/>
        <dbReference type="ChEBI" id="CHEBI:29034"/>
        <dbReference type="EC" id="1.16.3.1"/>
    </reaction>
</comment>
<comment type="subunit">
    <text evidence="1">Oligomer of 12 or 24 subunits. The functional molecule is roughly spherical and contains a central cavity into which the polymeric mineral iron core is deposited (By similarity).</text>
</comment>
<comment type="subcellular location">
    <subcellularLocation>
        <location>Cytoplasm</location>
    </subcellularLocation>
</comment>
<comment type="tissue specificity">
    <text>Expressed in somatic tissues but not in oocytes.</text>
</comment>
<comment type="similarity">
    <text evidence="3">Belongs to the ferritin family.</text>
</comment>
<accession>P42577</accession>
<proteinExistence type="evidence at transcript level"/>
<organism>
    <name type="scientific">Lymnaea stagnalis</name>
    <name type="common">Great pond snail</name>
    <name type="synonym">Helix stagnalis</name>
    <dbReference type="NCBI Taxonomy" id="6523"/>
    <lineage>
        <taxon>Eukaryota</taxon>
        <taxon>Metazoa</taxon>
        <taxon>Spiralia</taxon>
        <taxon>Lophotrochozoa</taxon>
        <taxon>Mollusca</taxon>
        <taxon>Gastropoda</taxon>
        <taxon>Heterobranchia</taxon>
        <taxon>Euthyneura</taxon>
        <taxon>Panpulmonata</taxon>
        <taxon>Hygrophila</taxon>
        <taxon>Lymnaeoidea</taxon>
        <taxon>Lymnaeidae</taxon>
        <taxon>Lymnaea</taxon>
    </lineage>
</organism>